<evidence type="ECO:0000255" key="1">
    <source>
        <dbReference type="HAMAP-Rule" id="MF_00028"/>
    </source>
</evidence>
<keyword id="KW-0169">Cobalamin biosynthesis</keyword>
<keyword id="KW-0315">Glutamine amidotransferase</keyword>
<keyword id="KW-1185">Reference proteome</keyword>
<name>COBQ_SYNR3</name>
<protein>
    <recommendedName>
        <fullName evidence="1">Cobyric acid synthase</fullName>
    </recommendedName>
</protein>
<feature type="chain" id="PRO_0000332396" description="Cobyric acid synthase">
    <location>
        <begin position="1"/>
        <end position="493"/>
    </location>
</feature>
<feature type="domain" description="GATase cobBQ-type" evidence="1">
    <location>
        <begin position="255"/>
        <end position="441"/>
    </location>
</feature>
<feature type="active site" description="Nucleophile" evidence="1">
    <location>
        <position position="336"/>
    </location>
</feature>
<feature type="active site" evidence="1">
    <location>
        <position position="433"/>
    </location>
</feature>
<reference key="1">
    <citation type="submission" date="2006-05" db="EMBL/GenBank/DDBJ databases">
        <authorList>
            <consortium name="Genoscope"/>
        </authorList>
    </citation>
    <scope>NUCLEOTIDE SEQUENCE [LARGE SCALE GENOMIC DNA]</scope>
    <source>
        <strain>RCC307</strain>
    </source>
</reference>
<sequence>MTPPTPLMVLGTSSGAGKSLMTAALCRVLKRRGEQPLPFKGQNMSNNAWVDQSGGEMAYSQALQSWAAGLEPNCAMNPVLLKPQGNSTSEVIHGGESVGMARAETYYQEWFKPGWLAIRQGLEQLRQQHPHGRLVLEGAGSPVEVNLQHRDLTNLRLAQYLRARCLLVADIERGGVFAQLVGTLQLLRPVERPLVKGLLINRFRGRQELFDPGVSWLSDNTGVPVLGVMPWLDELFPPEDSLDLLERRGRKANAELEIAVLRLPSLSNFSDLDPLEAEPSVQLRWVQPGEALGQPDAVVLPGSKQTLRDLKALQASGLARELQRFSAGGGAVLGICGGLQMLGRELLDPDGLEGAAGASAAGLNLLPLQTRFGGSKALRQRQAVAHWPTAESCPIEGFELHRGSTIALEPLQALCQEEGLGWVQGQVAGSYLHGLLENGRWRRQWLNQLRRRKQLPELAEDQGHHSLQREELLDRLADAFEANVDLTPLISDP</sequence>
<comment type="function">
    <text evidence="1">Catalyzes amidations at positions B, D, E, and G on adenosylcobyrinic A,C-diamide. NH(2) groups are provided by glutamine, and one molecule of ATP is hydrogenolyzed for each amidation.</text>
</comment>
<comment type="pathway">
    <text evidence="1">Cofactor biosynthesis; adenosylcobalamin biosynthesis.</text>
</comment>
<comment type="similarity">
    <text evidence="1">Belongs to the CobB/CobQ family. CobQ subfamily.</text>
</comment>
<gene>
    <name evidence="1" type="primary">cobQ</name>
    <name type="ordered locus">SynRCC307_1699</name>
</gene>
<dbReference type="EMBL" id="CT978603">
    <property type="protein sequence ID" value="CAK28602.1"/>
    <property type="molecule type" value="Genomic_DNA"/>
</dbReference>
<dbReference type="SMR" id="A5GUP3"/>
<dbReference type="STRING" id="316278.SynRCC307_1699"/>
<dbReference type="KEGG" id="syr:SynRCC307_1699"/>
<dbReference type="eggNOG" id="COG1492">
    <property type="taxonomic scope" value="Bacteria"/>
</dbReference>
<dbReference type="HOGENOM" id="CLU_019250_2_2_3"/>
<dbReference type="UniPathway" id="UPA00148"/>
<dbReference type="Proteomes" id="UP000001115">
    <property type="component" value="Chromosome"/>
</dbReference>
<dbReference type="GO" id="GO:0015420">
    <property type="term" value="F:ABC-type vitamin B12 transporter activity"/>
    <property type="evidence" value="ECO:0007669"/>
    <property type="project" value="UniProtKB-UniRule"/>
</dbReference>
<dbReference type="GO" id="GO:0003824">
    <property type="term" value="F:catalytic activity"/>
    <property type="evidence" value="ECO:0007669"/>
    <property type="project" value="InterPro"/>
</dbReference>
<dbReference type="GO" id="GO:0009236">
    <property type="term" value="P:cobalamin biosynthetic process"/>
    <property type="evidence" value="ECO:0007669"/>
    <property type="project" value="UniProtKB-UniRule"/>
</dbReference>
<dbReference type="CDD" id="cd01750">
    <property type="entry name" value="GATase1_CobQ"/>
    <property type="match status" value="1"/>
</dbReference>
<dbReference type="Gene3D" id="3.40.50.880">
    <property type="match status" value="1"/>
</dbReference>
<dbReference type="Gene3D" id="3.40.50.300">
    <property type="entry name" value="P-loop containing nucleotide triphosphate hydrolases"/>
    <property type="match status" value="1"/>
</dbReference>
<dbReference type="HAMAP" id="MF_00028">
    <property type="entry name" value="CobQ"/>
    <property type="match status" value="1"/>
</dbReference>
<dbReference type="InterPro" id="IPR029062">
    <property type="entry name" value="Class_I_gatase-like"/>
</dbReference>
<dbReference type="InterPro" id="IPR002586">
    <property type="entry name" value="CobQ/CobB/MinD/ParA_Nub-bd_dom"/>
</dbReference>
<dbReference type="InterPro" id="IPR033949">
    <property type="entry name" value="CobQ_GATase1"/>
</dbReference>
<dbReference type="InterPro" id="IPR004459">
    <property type="entry name" value="CobQ_synth"/>
</dbReference>
<dbReference type="InterPro" id="IPR011698">
    <property type="entry name" value="GATase_3"/>
</dbReference>
<dbReference type="InterPro" id="IPR027417">
    <property type="entry name" value="P-loop_NTPase"/>
</dbReference>
<dbReference type="NCBIfam" id="TIGR00313">
    <property type="entry name" value="cobQ"/>
    <property type="match status" value="1"/>
</dbReference>
<dbReference type="NCBIfam" id="NF001989">
    <property type="entry name" value="PRK00784.1"/>
    <property type="match status" value="1"/>
</dbReference>
<dbReference type="PANTHER" id="PTHR21343:SF1">
    <property type="entry name" value="COBYRIC ACID SYNTHASE"/>
    <property type="match status" value="1"/>
</dbReference>
<dbReference type="PANTHER" id="PTHR21343">
    <property type="entry name" value="DETHIOBIOTIN SYNTHETASE"/>
    <property type="match status" value="1"/>
</dbReference>
<dbReference type="Pfam" id="PF01656">
    <property type="entry name" value="CbiA"/>
    <property type="match status" value="1"/>
</dbReference>
<dbReference type="Pfam" id="PF07685">
    <property type="entry name" value="GATase_3"/>
    <property type="match status" value="1"/>
</dbReference>
<dbReference type="SUPFAM" id="SSF52317">
    <property type="entry name" value="Class I glutamine amidotransferase-like"/>
    <property type="match status" value="1"/>
</dbReference>
<dbReference type="SUPFAM" id="SSF52540">
    <property type="entry name" value="P-loop containing nucleoside triphosphate hydrolases"/>
    <property type="match status" value="1"/>
</dbReference>
<dbReference type="PROSITE" id="PS51274">
    <property type="entry name" value="GATASE_COBBQ"/>
    <property type="match status" value="1"/>
</dbReference>
<proteinExistence type="inferred from homology"/>
<accession>A5GUP3</accession>
<organism>
    <name type="scientific">Synechococcus sp. (strain RCC307)</name>
    <dbReference type="NCBI Taxonomy" id="316278"/>
    <lineage>
        <taxon>Bacteria</taxon>
        <taxon>Bacillati</taxon>
        <taxon>Cyanobacteriota</taxon>
        <taxon>Cyanophyceae</taxon>
        <taxon>Synechococcales</taxon>
        <taxon>Synechococcaceae</taxon>
        <taxon>Synechococcus</taxon>
    </lineage>
</organism>